<sequence length="179" mass="19910">MQDRVERVTRYIDNVMANTEGTRAEGVYVVSVALKGRAGQQKLEVLVDSDKGIAVEQCAWVSRRILEKLEEDDEPLSEEIAIEVSSPGLGTPLQLPRQYYRHLGKLLHVRYRTPEGAEAEIEGYLQEAQLDGVNGGDSADSVIVLKPKVQGKRPRNAQPLENIRLPLSRIIKAVPEAEL</sequence>
<keyword id="KW-0963">Cytoplasm</keyword>
<keyword id="KW-0690">Ribosome biogenesis</keyword>
<dbReference type="EMBL" id="CP000108">
    <property type="protein sequence ID" value="ABB28720.1"/>
    <property type="molecule type" value="Genomic_DNA"/>
</dbReference>
<dbReference type="SMR" id="Q3AQK5"/>
<dbReference type="STRING" id="340177.Cag_1464"/>
<dbReference type="KEGG" id="cch:Cag_1464"/>
<dbReference type="eggNOG" id="COG0779">
    <property type="taxonomic scope" value="Bacteria"/>
</dbReference>
<dbReference type="HOGENOM" id="CLU_070525_3_1_10"/>
<dbReference type="GO" id="GO:0005829">
    <property type="term" value="C:cytosol"/>
    <property type="evidence" value="ECO:0007669"/>
    <property type="project" value="TreeGrafter"/>
</dbReference>
<dbReference type="GO" id="GO:0000028">
    <property type="term" value="P:ribosomal small subunit assembly"/>
    <property type="evidence" value="ECO:0007669"/>
    <property type="project" value="TreeGrafter"/>
</dbReference>
<dbReference type="GO" id="GO:0006412">
    <property type="term" value="P:translation"/>
    <property type="evidence" value="ECO:0007669"/>
    <property type="project" value="TreeGrafter"/>
</dbReference>
<dbReference type="Gene3D" id="3.30.300.70">
    <property type="entry name" value="RimP-like superfamily, N-terminal"/>
    <property type="match status" value="1"/>
</dbReference>
<dbReference type="HAMAP" id="MF_01077">
    <property type="entry name" value="RimP"/>
    <property type="match status" value="1"/>
</dbReference>
<dbReference type="InterPro" id="IPR003728">
    <property type="entry name" value="Ribosome_maturation_RimP"/>
</dbReference>
<dbReference type="InterPro" id="IPR028989">
    <property type="entry name" value="RimP_N"/>
</dbReference>
<dbReference type="InterPro" id="IPR035956">
    <property type="entry name" value="RimP_N_sf"/>
</dbReference>
<dbReference type="NCBIfam" id="NF011234">
    <property type="entry name" value="PRK14641.1"/>
    <property type="match status" value="1"/>
</dbReference>
<dbReference type="PANTHER" id="PTHR33867">
    <property type="entry name" value="RIBOSOME MATURATION FACTOR RIMP"/>
    <property type="match status" value="1"/>
</dbReference>
<dbReference type="PANTHER" id="PTHR33867:SF1">
    <property type="entry name" value="RIBOSOME MATURATION FACTOR RIMP"/>
    <property type="match status" value="1"/>
</dbReference>
<dbReference type="Pfam" id="PF02576">
    <property type="entry name" value="RimP_N"/>
    <property type="match status" value="1"/>
</dbReference>
<dbReference type="SUPFAM" id="SSF75420">
    <property type="entry name" value="YhbC-like, N-terminal domain"/>
    <property type="match status" value="1"/>
</dbReference>
<feature type="chain" id="PRO_0000229231" description="Ribosome maturation factor RimP">
    <location>
        <begin position="1"/>
        <end position="179"/>
    </location>
</feature>
<gene>
    <name evidence="1" type="primary">rimP</name>
    <name type="ordered locus">Cag_1464</name>
</gene>
<organism>
    <name type="scientific">Chlorobium chlorochromatii (strain CaD3)</name>
    <dbReference type="NCBI Taxonomy" id="340177"/>
    <lineage>
        <taxon>Bacteria</taxon>
        <taxon>Pseudomonadati</taxon>
        <taxon>Chlorobiota</taxon>
        <taxon>Chlorobiia</taxon>
        <taxon>Chlorobiales</taxon>
        <taxon>Chlorobiaceae</taxon>
        <taxon>Chlorobium/Pelodictyon group</taxon>
        <taxon>Chlorobium</taxon>
    </lineage>
</organism>
<comment type="function">
    <text evidence="1">Required for maturation of 30S ribosomal subunits.</text>
</comment>
<comment type="subcellular location">
    <subcellularLocation>
        <location evidence="1">Cytoplasm</location>
    </subcellularLocation>
</comment>
<comment type="similarity">
    <text evidence="1">Belongs to the RimP family.</text>
</comment>
<proteinExistence type="inferred from homology"/>
<reference key="1">
    <citation type="submission" date="2005-08" db="EMBL/GenBank/DDBJ databases">
        <title>Complete sequence of Chlorobium chlorochromatii CaD3.</title>
        <authorList>
            <consortium name="US DOE Joint Genome Institute"/>
            <person name="Copeland A."/>
            <person name="Lucas S."/>
            <person name="Lapidus A."/>
            <person name="Barry K."/>
            <person name="Detter J.C."/>
            <person name="Glavina T."/>
            <person name="Hammon N."/>
            <person name="Israni S."/>
            <person name="Pitluck S."/>
            <person name="Bryant D."/>
            <person name="Schmutz J."/>
            <person name="Larimer F."/>
            <person name="Land M."/>
            <person name="Kyrpides N."/>
            <person name="Ivanova N."/>
            <person name="Richardson P."/>
        </authorList>
    </citation>
    <scope>NUCLEOTIDE SEQUENCE [LARGE SCALE GENOMIC DNA]</scope>
    <source>
        <strain>CaD3</strain>
    </source>
</reference>
<protein>
    <recommendedName>
        <fullName evidence="1">Ribosome maturation factor RimP</fullName>
    </recommendedName>
</protein>
<name>RIMP_CHLCH</name>
<evidence type="ECO:0000255" key="1">
    <source>
        <dbReference type="HAMAP-Rule" id="MF_01077"/>
    </source>
</evidence>
<accession>Q3AQK5</accession>